<gene>
    <name type="ordered locus">BCG_3849c</name>
</gene>
<keyword id="KW-0489">Methyltransferase</keyword>
<keyword id="KW-0949">S-adenosyl-L-methionine</keyword>
<keyword id="KW-0808">Transferase</keyword>
<comment type="function">
    <text evidence="1">Exhibits S-adenosyl-L-methionine-dependent methyltransferase activity.</text>
</comment>
<comment type="similarity">
    <text evidence="2">Belongs to the UPF0677 family.</text>
</comment>
<name>Y3849_MYCBP</name>
<organism>
    <name type="scientific">Mycobacterium bovis (strain BCG / Pasteur 1173P2)</name>
    <dbReference type="NCBI Taxonomy" id="410289"/>
    <lineage>
        <taxon>Bacteria</taxon>
        <taxon>Bacillati</taxon>
        <taxon>Actinomycetota</taxon>
        <taxon>Actinomycetes</taxon>
        <taxon>Mycobacteriales</taxon>
        <taxon>Mycobacteriaceae</taxon>
        <taxon>Mycobacterium</taxon>
        <taxon>Mycobacterium tuberculosis complex</taxon>
    </lineage>
</organism>
<accession>A1KQC1</accession>
<dbReference type="EC" id="2.1.1.-"/>
<dbReference type="EMBL" id="AM408590">
    <property type="protein sequence ID" value="CAL73839.1"/>
    <property type="molecule type" value="Genomic_DNA"/>
</dbReference>
<dbReference type="RefSeq" id="WP_003420620.1">
    <property type="nucleotide sequence ID" value="NC_008769.1"/>
</dbReference>
<dbReference type="SMR" id="A1KQC1"/>
<dbReference type="KEGG" id="mbb:BCG_3849c"/>
<dbReference type="HOGENOM" id="CLU_056160_2_1_11"/>
<dbReference type="Proteomes" id="UP000001472">
    <property type="component" value="Chromosome"/>
</dbReference>
<dbReference type="GO" id="GO:0008168">
    <property type="term" value="F:methyltransferase activity"/>
    <property type="evidence" value="ECO:0007669"/>
    <property type="project" value="UniProtKB-KW"/>
</dbReference>
<dbReference type="GO" id="GO:0032259">
    <property type="term" value="P:methylation"/>
    <property type="evidence" value="ECO:0007669"/>
    <property type="project" value="UniProtKB-KW"/>
</dbReference>
<dbReference type="Gene3D" id="3.40.50.150">
    <property type="entry name" value="Vaccinia Virus protein VP39"/>
    <property type="match status" value="1"/>
</dbReference>
<dbReference type="InterPro" id="IPR007213">
    <property type="entry name" value="Ppm1/Ppm2/Tcmp"/>
</dbReference>
<dbReference type="InterPro" id="IPR029063">
    <property type="entry name" value="SAM-dependent_MTases_sf"/>
</dbReference>
<dbReference type="InterPro" id="IPR011610">
    <property type="entry name" value="SAM_mthyl_Trfase_ML2640-like"/>
</dbReference>
<dbReference type="NCBIfam" id="TIGR00027">
    <property type="entry name" value="mthyl_TIGR00027"/>
    <property type="match status" value="1"/>
</dbReference>
<dbReference type="PANTHER" id="PTHR43619">
    <property type="entry name" value="S-ADENOSYL-L-METHIONINE-DEPENDENT METHYLTRANSFERASE YKTD-RELATED"/>
    <property type="match status" value="1"/>
</dbReference>
<dbReference type="PANTHER" id="PTHR43619:SF2">
    <property type="entry name" value="S-ADENOSYL-L-METHIONINE-DEPENDENT METHYLTRANSFERASES SUPERFAMILY PROTEIN"/>
    <property type="match status" value="1"/>
</dbReference>
<dbReference type="Pfam" id="PF04072">
    <property type="entry name" value="LCM"/>
    <property type="match status" value="1"/>
</dbReference>
<dbReference type="SUPFAM" id="SSF53335">
    <property type="entry name" value="S-adenosyl-L-methionine-dependent methyltransferases"/>
    <property type="match status" value="1"/>
</dbReference>
<feature type="chain" id="PRO_0000361148" description="Putative S-adenosyl-L-methionine-dependent methyltransferase BCG_3849c">
    <location>
        <begin position="1"/>
        <end position="308"/>
    </location>
</feature>
<feature type="binding site" evidence="1">
    <location>
        <position position="131"/>
    </location>
    <ligand>
        <name>S-adenosyl-L-methionine</name>
        <dbReference type="ChEBI" id="CHEBI:59789"/>
    </ligand>
</feature>
<feature type="binding site" evidence="1">
    <location>
        <begin position="160"/>
        <end position="161"/>
    </location>
    <ligand>
        <name>S-adenosyl-L-methionine</name>
        <dbReference type="ChEBI" id="CHEBI:59789"/>
    </ligand>
</feature>
<evidence type="ECO:0000250" key="1"/>
<evidence type="ECO:0000305" key="2"/>
<protein>
    <recommendedName>
        <fullName>Putative S-adenosyl-L-methionine-dependent methyltransferase BCG_3849c</fullName>
        <ecNumber>2.1.1.-</ecNumber>
    </recommendedName>
</protein>
<sequence length="308" mass="33390">MARTDDDSWDLATGVGATATLVAAGRARAARAAQPLIDDPFAEPLVRAVGVEFLTRWATGELDAADVDDPDAAWGLQRMTTELVVRTRYFDQFFLDAAAAGVRQAVILASGLDARGYRLPWPADTTVFEVDQPRVLEFKAQTLAGLGAQPTADLRMVPADLRHDWPDALRRGGFDAAEPAAWIAEGLFGYLPPDAQNRLLDHVTDLSAPGSRLALEAFLGSADRDSARVEEMIRTATRGWREHGFHLDIWALNYAGPRHEVSGYLDNHGWRSVGTTTAQLLAAHDLPAAPALPAGLADRPNYWTCVLG</sequence>
<reference key="1">
    <citation type="journal article" date="2007" name="Proc. Natl. Acad. Sci. U.S.A.">
        <title>Genome plasticity of BCG and impact on vaccine efficacy.</title>
        <authorList>
            <person name="Brosch R."/>
            <person name="Gordon S.V."/>
            <person name="Garnier T."/>
            <person name="Eiglmeier K."/>
            <person name="Frigui W."/>
            <person name="Valenti P."/>
            <person name="Dos Santos S."/>
            <person name="Duthoy S."/>
            <person name="Lacroix C."/>
            <person name="Garcia-Pelayo C."/>
            <person name="Inwald J.K."/>
            <person name="Golby P."/>
            <person name="Garcia J.N."/>
            <person name="Hewinson R.G."/>
            <person name="Behr M.A."/>
            <person name="Quail M.A."/>
            <person name="Churcher C."/>
            <person name="Barrell B.G."/>
            <person name="Parkhill J."/>
            <person name="Cole S.T."/>
        </authorList>
    </citation>
    <scope>NUCLEOTIDE SEQUENCE [LARGE SCALE GENOMIC DNA]</scope>
    <source>
        <strain>BCG / Pasteur 1173P2</strain>
    </source>
</reference>
<proteinExistence type="inferred from homology"/>